<comment type="function">
    <text evidence="1">Binds to 23S rRNA. Forms part of two intersubunit bridges in the 70S ribosome.</text>
</comment>
<comment type="subunit">
    <text evidence="1">Part of the 50S ribosomal subunit. Forms a cluster with proteins L3 and L19. In the 70S ribosome, L14 and L19 interact and together make contacts with the 16S rRNA in bridges B5 and B8.</text>
</comment>
<comment type="similarity">
    <text evidence="1">Belongs to the universal ribosomal protein uL14 family.</text>
</comment>
<keyword id="KW-0002">3D-structure</keyword>
<keyword id="KW-1185">Reference proteome</keyword>
<keyword id="KW-0687">Ribonucleoprotein</keyword>
<keyword id="KW-0689">Ribosomal protein</keyword>
<keyword id="KW-0694">RNA-binding</keyword>
<keyword id="KW-0699">rRNA-binding</keyword>
<name>RL14_MYCS2</name>
<sequence>MIQQESRLKVADNTGAKEILCIRVLGGSSRRYAGIGDVIVATVKDAIPGGNVKRGDVVKAVVVRTVKERRRADGSYIKFDENAAVIIKNDNDPRGTRIFGPVGRELREKKFMKIVSLAPEVL</sequence>
<gene>
    <name evidence="1" type="primary">rplN</name>
    <name type="ordered locus">MSMEG_1465</name>
    <name type="ordered locus">MSMEI_1429</name>
</gene>
<reference key="1">
    <citation type="submission" date="2006-10" db="EMBL/GenBank/DDBJ databases">
        <authorList>
            <person name="Fleischmann R.D."/>
            <person name="Dodson R.J."/>
            <person name="Haft D.H."/>
            <person name="Merkel J.S."/>
            <person name="Nelson W.C."/>
            <person name="Fraser C.M."/>
        </authorList>
    </citation>
    <scope>NUCLEOTIDE SEQUENCE [LARGE SCALE GENOMIC DNA]</scope>
    <source>
        <strain>ATCC 700084 / mc(2)155</strain>
    </source>
</reference>
<reference key="2">
    <citation type="journal article" date="2007" name="Genome Biol.">
        <title>Interrupted coding sequences in Mycobacterium smegmatis: authentic mutations or sequencing errors?</title>
        <authorList>
            <person name="Deshayes C."/>
            <person name="Perrodou E."/>
            <person name="Gallien S."/>
            <person name="Euphrasie D."/>
            <person name="Schaeffer C."/>
            <person name="Van-Dorsselaer A."/>
            <person name="Poch O."/>
            <person name="Lecompte O."/>
            <person name="Reyrat J.-M."/>
        </authorList>
    </citation>
    <scope>NUCLEOTIDE SEQUENCE [LARGE SCALE GENOMIC DNA]</scope>
    <source>
        <strain>ATCC 700084 / mc(2)155</strain>
    </source>
</reference>
<reference key="3">
    <citation type="journal article" date="2009" name="Genome Res.">
        <title>Ortho-proteogenomics: multiple proteomes investigation through orthology and a new MS-based protocol.</title>
        <authorList>
            <person name="Gallien S."/>
            <person name="Perrodou E."/>
            <person name="Carapito C."/>
            <person name="Deshayes C."/>
            <person name="Reyrat J.-M."/>
            <person name="Van Dorsselaer A."/>
            <person name="Poch O."/>
            <person name="Schaeffer C."/>
            <person name="Lecompte O."/>
        </authorList>
    </citation>
    <scope>NUCLEOTIDE SEQUENCE [LARGE SCALE GENOMIC DNA]</scope>
    <scope>IDENTIFICATION BY MASS SPECTROMETRY [LARGE SCALE ANALYSIS]</scope>
    <scope>IDENTIFICATION OF N-TERMINUS</scope>
    <source>
        <strain>ATCC 700084 / mc(2)155</strain>
    </source>
</reference>
<evidence type="ECO:0000255" key="1">
    <source>
        <dbReference type="HAMAP-Rule" id="MF_01367"/>
    </source>
</evidence>
<evidence type="ECO:0000305" key="2"/>
<evidence type="ECO:0007829" key="3">
    <source>
        <dbReference type="PDB" id="5O60"/>
    </source>
</evidence>
<evidence type="ECO:0007829" key="4">
    <source>
        <dbReference type="PDB" id="5XYM"/>
    </source>
</evidence>
<evidence type="ECO:0007829" key="5">
    <source>
        <dbReference type="PDB" id="7XAM"/>
    </source>
</evidence>
<dbReference type="EMBL" id="CP000480">
    <property type="protein sequence ID" value="ABK72408.1"/>
    <property type="molecule type" value="Genomic_DNA"/>
</dbReference>
<dbReference type="EMBL" id="CP001663">
    <property type="protein sequence ID" value="AFP37902.1"/>
    <property type="molecule type" value="Genomic_DNA"/>
</dbReference>
<dbReference type="RefSeq" id="WP_003892852.1">
    <property type="nucleotide sequence ID" value="NZ_SIJM01000016.1"/>
</dbReference>
<dbReference type="RefSeq" id="YP_885847.1">
    <property type="nucleotide sequence ID" value="NC_008596.1"/>
</dbReference>
<dbReference type="PDB" id="5O60">
    <property type="method" value="EM"/>
    <property type="resolution" value="3.20 A"/>
    <property type="chains" value="L=1-122"/>
</dbReference>
<dbReference type="PDB" id="5O61">
    <property type="method" value="EM"/>
    <property type="resolution" value="3.31 A"/>
    <property type="chains" value="L=1-122"/>
</dbReference>
<dbReference type="PDB" id="5XYM">
    <property type="method" value="EM"/>
    <property type="resolution" value="3.08 A"/>
    <property type="chains" value="K=1-122"/>
</dbReference>
<dbReference type="PDB" id="5ZEB">
    <property type="method" value="EM"/>
    <property type="resolution" value="3.40 A"/>
    <property type="chains" value="L=1-122"/>
</dbReference>
<dbReference type="PDB" id="5ZEP">
    <property type="method" value="EM"/>
    <property type="resolution" value="3.40 A"/>
    <property type="chains" value="L=1-122"/>
</dbReference>
<dbReference type="PDB" id="5ZET">
    <property type="method" value="EM"/>
    <property type="resolution" value="3.20 A"/>
    <property type="chains" value="L=1-122"/>
</dbReference>
<dbReference type="PDB" id="6DZI">
    <property type="method" value="EM"/>
    <property type="resolution" value="3.46 A"/>
    <property type="chains" value="L=1-122"/>
</dbReference>
<dbReference type="PDB" id="6DZP">
    <property type="method" value="EM"/>
    <property type="resolution" value="3.42 A"/>
    <property type="chains" value="L=1-122"/>
</dbReference>
<dbReference type="PDB" id="7S0S">
    <property type="method" value="EM"/>
    <property type="resolution" value="3.05 A"/>
    <property type="chains" value="M=1-122"/>
</dbReference>
<dbReference type="PDB" id="7XAM">
    <property type="method" value="EM"/>
    <property type="resolution" value="2.80 A"/>
    <property type="chains" value="L=1-122"/>
</dbReference>
<dbReference type="PDB" id="7Y41">
    <property type="method" value="EM"/>
    <property type="resolution" value="4.10 A"/>
    <property type="chains" value="L=1-122"/>
</dbReference>
<dbReference type="PDB" id="8FR8">
    <property type="method" value="EM"/>
    <property type="resolution" value="2.76 A"/>
    <property type="chains" value="U=1-122"/>
</dbReference>
<dbReference type="PDB" id="8KAB">
    <property type="method" value="EM"/>
    <property type="resolution" value="3.30 A"/>
    <property type="chains" value="L=1-122"/>
</dbReference>
<dbReference type="PDB" id="8V9J">
    <property type="method" value="EM"/>
    <property type="resolution" value="3.10 A"/>
    <property type="chains" value="M=1-122"/>
</dbReference>
<dbReference type="PDB" id="8V9K">
    <property type="method" value="EM"/>
    <property type="resolution" value="3.10 A"/>
    <property type="chains" value="M=1-122"/>
</dbReference>
<dbReference type="PDB" id="8V9L">
    <property type="method" value="EM"/>
    <property type="resolution" value="3.00 A"/>
    <property type="chains" value="M=1-122"/>
</dbReference>
<dbReference type="PDB" id="8VIO">
    <property type="method" value="EM"/>
    <property type="resolution" value="3.26 A"/>
    <property type="chains" value="L=1-122"/>
</dbReference>
<dbReference type="PDB" id="8VK0">
    <property type="method" value="EM"/>
    <property type="resolution" value="3.14 A"/>
    <property type="chains" value="L=1-122"/>
</dbReference>
<dbReference type="PDB" id="8VK7">
    <property type="method" value="EM"/>
    <property type="resolution" value="3.09 A"/>
    <property type="chains" value="L=1-122"/>
</dbReference>
<dbReference type="PDB" id="8VKI">
    <property type="method" value="EM"/>
    <property type="resolution" value="2.96 A"/>
    <property type="chains" value="L=1-122"/>
</dbReference>
<dbReference type="PDB" id="8VKW">
    <property type="method" value="EM"/>
    <property type="resolution" value="3.44 A"/>
    <property type="chains" value="L=1-122"/>
</dbReference>
<dbReference type="PDB" id="8VR4">
    <property type="method" value="EM"/>
    <property type="resolution" value="2.80 A"/>
    <property type="chains" value="L=1-122"/>
</dbReference>
<dbReference type="PDB" id="8VR8">
    <property type="method" value="EM"/>
    <property type="resolution" value="3.25 A"/>
    <property type="chains" value="L=1-122"/>
</dbReference>
<dbReference type="PDB" id="8VRL">
    <property type="method" value="EM"/>
    <property type="resolution" value="3.33 A"/>
    <property type="chains" value="L=1-122"/>
</dbReference>
<dbReference type="PDB" id="8WHX">
    <property type="method" value="EM"/>
    <property type="resolution" value="2.80 A"/>
    <property type="chains" value="N=1-122"/>
</dbReference>
<dbReference type="PDB" id="8WHY">
    <property type="method" value="EM"/>
    <property type="resolution" value="2.70 A"/>
    <property type="chains" value="N=1-122"/>
</dbReference>
<dbReference type="PDB" id="8WI7">
    <property type="method" value="EM"/>
    <property type="resolution" value="3.50 A"/>
    <property type="chains" value="N=1-122"/>
</dbReference>
<dbReference type="PDB" id="8WI8">
    <property type="method" value="EM"/>
    <property type="resolution" value="2.70 A"/>
    <property type="chains" value="N=1-122"/>
</dbReference>
<dbReference type="PDB" id="8WIB">
    <property type="method" value="EM"/>
    <property type="resolution" value="3.50 A"/>
    <property type="chains" value="N=1-122"/>
</dbReference>
<dbReference type="PDB" id="8WIC">
    <property type="method" value="EM"/>
    <property type="resolution" value="3.50 A"/>
    <property type="chains" value="N=1-122"/>
</dbReference>
<dbReference type="PDB" id="8XZ3">
    <property type="method" value="EM"/>
    <property type="resolution" value="3.60 A"/>
    <property type="chains" value="L=1-122"/>
</dbReference>
<dbReference type="PDBsum" id="5O60"/>
<dbReference type="PDBsum" id="5O61"/>
<dbReference type="PDBsum" id="5XYM"/>
<dbReference type="PDBsum" id="5ZEB"/>
<dbReference type="PDBsum" id="5ZEP"/>
<dbReference type="PDBsum" id="5ZET"/>
<dbReference type="PDBsum" id="6DZI"/>
<dbReference type="PDBsum" id="6DZP"/>
<dbReference type="PDBsum" id="7S0S"/>
<dbReference type="PDBsum" id="7XAM"/>
<dbReference type="PDBsum" id="7Y41"/>
<dbReference type="PDBsum" id="8FR8"/>
<dbReference type="PDBsum" id="8KAB"/>
<dbReference type="PDBsum" id="8V9J"/>
<dbReference type="PDBsum" id="8V9K"/>
<dbReference type="PDBsum" id="8V9L"/>
<dbReference type="PDBsum" id="8VIO"/>
<dbReference type="PDBsum" id="8VK0"/>
<dbReference type="PDBsum" id="8VK7"/>
<dbReference type="PDBsum" id="8VKI"/>
<dbReference type="PDBsum" id="8VKW"/>
<dbReference type="PDBsum" id="8VR4"/>
<dbReference type="PDBsum" id="8VR8"/>
<dbReference type="PDBsum" id="8VRL"/>
<dbReference type="PDBsum" id="8WHX"/>
<dbReference type="PDBsum" id="8WHY"/>
<dbReference type="PDBsum" id="8WI7"/>
<dbReference type="PDBsum" id="8WI8"/>
<dbReference type="PDBsum" id="8WIB"/>
<dbReference type="PDBsum" id="8WIC"/>
<dbReference type="PDBsum" id="8XZ3"/>
<dbReference type="EMDB" id="EMD-29397"/>
<dbReference type="EMDB" id="EMD-33096"/>
<dbReference type="EMDB" id="EMD-33599"/>
<dbReference type="EMDB" id="EMD-37007"/>
<dbReference type="EMDB" id="EMD-3750"/>
<dbReference type="EMDB" id="EMD-3751"/>
<dbReference type="EMDB" id="EMD-37551"/>
<dbReference type="EMDB" id="EMD-37552"/>
<dbReference type="EMDB" id="EMD-37559"/>
<dbReference type="EMDB" id="EMD-37560"/>
<dbReference type="EMDB" id="EMD-37562"/>
<dbReference type="EMDB" id="EMD-37563"/>
<dbReference type="EMDB" id="EMD-38788"/>
<dbReference type="EMDB" id="EMD-43074"/>
<dbReference type="EMDB" id="EMD-43075"/>
<dbReference type="EMDB" id="EMD-43076"/>
<dbReference type="EMDB" id="EMD-43267"/>
<dbReference type="EMDB" id="EMD-43294"/>
<dbReference type="EMDB" id="EMD-43305"/>
<dbReference type="EMDB" id="EMD-43317"/>
<dbReference type="EMDB" id="EMD-43333"/>
<dbReference type="EMDB" id="EMD-43476"/>
<dbReference type="EMDB" id="EMD-43477"/>
<dbReference type="EMDB" id="EMD-43484"/>
<dbReference type="EMDB" id="EMD-6789"/>
<dbReference type="EMDB" id="EMD-6920"/>
<dbReference type="EMDB" id="EMD-6921"/>
<dbReference type="EMDB" id="EMD-6922"/>
<dbReference type="EMDB" id="EMD-8932"/>
<dbReference type="EMDB" id="EMD-8937"/>
<dbReference type="SMR" id="A0QSF9"/>
<dbReference type="IntAct" id="A0QSF9">
    <property type="interactions" value="2"/>
</dbReference>
<dbReference type="STRING" id="246196.MSMEG_1465"/>
<dbReference type="PaxDb" id="246196-MSMEI_1429"/>
<dbReference type="GeneID" id="93456307"/>
<dbReference type="KEGG" id="msb:LJ00_07320"/>
<dbReference type="KEGG" id="msg:MSMEI_1429"/>
<dbReference type="KEGG" id="msm:MSMEG_1465"/>
<dbReference type="PATRIC" id="fig|246196.19.peg.1450"/>
<dbReference type="eggNOG" id="COG0093">
    <property type="taxonomic scope" value="Bacteria"/>
</dbReference>
<dbReference type="OrthoDB" id="9806379at2"/>
<dbReference type="Proteomes" id="UP000000757">
    <property type="component" value="Chromosome"/>
</dbReference>
<dbReference type="Proteomes" id="UP000006158">
    <property type="component" value="Chromosome"/>
</dbReference>
<dbReference type="GO" id="GO:0022625">
    <property type="term" value="C:cytosolic large ribosomal subunit"/>
    <property type="evidence" value="ECO:0007669"/>
    <property type="project" value="TreeGrafter"/>
</dbReference>
<dbReference type="GO" id="GO:0070180">
    <property type="term" value="F:large ribosomal subunit rRNA binding"/>
    <property type="evidence" value="ECO:0007669"/>
    <property type="project" value="TreeGrafter"/>
</dbReference>
<dbReference type="GO" id="GO:0003735">
    <property type="term" value="F:structural constituent of ribosome"/>
    <property type="evidence" value="ECO:0007669"/>
    <property type="project" value="InterPro"/>
</dbReference>
<dbReference type="GO" id="GO:0006412">
    <property type="term" value="P:translation"/>
    <property type="evidence" value="ECO:0007669"/>
    <property type="project" value="UniProtKB-UniRule"/>
</dbReference>
<dbReference type="CDD" id="cd00337">
    <property type="entry name" value="Ribosomal_uL14"/>
    <property type="match status" value="1"/>
</dbReference>
<dbReference type="FunFam" id="2.40.150.20:FF:000001">
    <property type="entry name" value="50S ribosomal protein L14"/>
    <property type="match status" value="1"/>
</dbReference>
<dbReference type="Gene3D" id="2.40.150.20">
    <property type="entry name" value="Ribosomal protein L14"/>
    <property type="match status" value="1"/>
</dbReference>
<dbReference type="HAMAP" id="MF_01367">
    <property type="entry name" value="Ribosomal_uL14"/>
    <property type="match status" value="1"/>
</dbReference>
<dbReference type="InterPro" id="IPR000218">
    <property type="entry name" value="Ribosomal_uL14"/>
</dbReference>
<dbReference type="InterPro" id="IPR005745">
    <property type="entry name" value="Ribosomal_uL14_bac-type"/>
</dbReference>
<dbReference type="InterPro" id="IPR019972">
    <property type="entry name" value="Ribosomal_uL14_CS"/>
</dbReference>
<dbReference type="InterPro" id="IPR036853">
    <property type="entry name" value="Ribosomal_uL14_sf"/>
</dbReference>
<dbReference type="NCBIfam" id="TIGR01067">
    <property type="entry name" value="rplN_bact"/>
    <property type="match status" value="1"/>
</dbReference>
<dbReference type="PANTHER" id="PTHR11761">
    <property type="entry name" value="50S/60S RIBOSOMAL PROTEIN L14/L23"/>
    <property type="match status" value="1"/>
</dbReference>
<dbReference type="PANTHER" id="PTHR11761:SF3">
    <property type="entry name" value="LARGE RIBOSOMAL SUBUNIT PROTEIN UL14M"/>
    <property type="match status" value="1"/>
</dbReference>
<dbReference type="Pfam" id="PF00238">
    <property type="entry name" value="Ribosomal_L14"/>
    <property type="match status" value="1"/>
</dbReference>
<dbReference type="SMART" id="SM01374">
    <property type="entry name" value="Ribosomal_L14"/>
    <property type="match status" value="1"/>
</dbReference>
<dbReference type="SUPFAM" id="SSF50193">
    <property type="entry name" value="Ribosomal protein L14"/>
    <property type="match status" value="1"/>
</dbReference>
<dbReference type="PROSITE" id="PS00049">
    <property type="entry name" value="RIBOSOMAL_L14"/>
    <property type="match status" value="1"/>
</dbReference>
<accession>A0QSF9</accession>
<accession>I7FY96</accession>
<proteinExistence type="evidence at protein level"/>
<protein>
    <recommendedName>
        <fullName evidence="1">Large ribosomal subunit protein uL14</fullName>
    </recommendedName>
    <alternativeName>
        <fullName evidence="2">50S ribosomal protein L14</fullName>
    </alternativeName>
</protein>
<feature type="chain" id="PRO_1000055641" description="Large ribosomal subunit protein uL14">
    <location>
        <begin position="1"/>
        <end position="122"/>
    </location>
</feature>
<feature type="strand" evidence="4">
    <location>
        <begin position="4"/>
        <end position="8"/>
    </location>
</feature>
<feature type="strand" evidence="3">
    <location>
        <begin position="12"/>
        <end position="16"/>
    </location>
</feature>
<feature type="strand" evidence="4">
    <location>
        <begin position="19"/>
        <end position="24"/>
    </location>
</feature>
<feature type="strand" evidence="3">
    <location>
        <begin position="26"/>
        <end position="29"/>
    </location>
</feature>
<feature type="strand" evidence="4">
    <location>
        <begin position="38"/>
        <end position="45"/>
    </location>
</feature>
<feature type="strand" evidence="4">
    <location>
        <begin position="48"/>
        <end position="52"/>
    </location>
</feature>
<feature type="strand" evidence="4">
    <location>
        <begin position="57"/>
        <end position="64"/>
    </location>
</feature>
<feature type="turn" evidence="4">
    <location>
        <begin position="71"/>
        <end position="74"/>
    </location>
</feature>
<feature type="strand" evidence="4">
    <location>
        <begin position="77"/>
        <end position="80"/>
    </location>
</feature>
<feature type="strand" evidence="4">
    <location>
        <begin position="83"/>
        <end position="87"/>
    </location>
</feature>
<feature type="strand" evidence="4">
    <location>
        <begin position="89"/>
        <end position="96"/>
    </location>
</feature>
<feature type="strand" evidence="5">
    <location>
        <begin position="100"/>
        <end position="102"/>
    </location>
</feature>
<feature type="helix" evidence="4">
    <location>
        <begin position="105"/>
        <end position="109"/>
    </location>
</feature>
<feature type="helix" evidence="4">
    <location>
        <begin position="112"/>
        <end position="116"/>
    </location>
</feature>
<feature type="strand" evidence="4">
    <location>
        <begin position="117"/>
        <end position="119"/>
    </location>
</feature>
<organism>
    <name type="scientific">Mycolicibacterium smegmatis (strain ATCC 700084 / mc(2)155)</name>
    <name type="common">Mycobacterium smegmatis</name>
    <dbReference type="NCBI Taxonomy" id="246196"/>
    <lineage>
        <taxon>Bacteria</taxon>
        <taxon>Bacillati</taxon>
        <taxon>Actinomycetota</taxon>
        <taxon>Actinomycetes</taxon>
        <taxon>Mycobacteriales</taxon>
        <taxon>Mycobacteriaceae</taxon>
        <taxon>Mycolicibacterium</taxon>
    </lineage>
</organism>